<reference key="1">
    <citation type="journal article" date="1999" name="FEBS Lett.">
        <title>The mitochondrial TIM22 preprotein translocase is highly conserved throughout the eukaryotic kingdom.</title>
        <authorList>
            <person name="Bauer M.F."/>
            <person name="Rothbauer U."/>
            <person name="Muehlenbein N."/>
            <person name="Smith R.J.H."/>
            <person name="Gerbitz K.-D."/>
            <person name="Neupert W."/>
            <person name="Brunner M."/>
            <person name="Hofmann S."/>
        </authorList>
    </citation>
    <scope>NUCLEOTIDE SEQUENCE [MRNA]</scope>
</reference>
<reference key="2">
    <citation type="journal article" date="1999" name="Genomics">
        <title>The human family of deafness/dystonia peptide (DDP) related mitochondrial import proteins.</title>
        <authorList>
            <person name="Jin H."/>
            <person name="Kendall E."/>
            <person name="Freeman T.C."/>
            <person name="Roberts R.G."/>
            <person name="Vetrie D.L.P."/>
        </authorList>
    </citation>
    <scope>NUCLEOTIDE SEQUENCE [MRNA]</scope>
</reference>
<reference key="3">
    <citation type="journal article" date="2004" name="Genome Res.">
        <title>The status, quality, and expansion of the NIH full-length cDNA project: the Mammalian Gene Collection (MGC).</title>
        <authorList>
            <consortium name="The MGC Project Team"/>
        </authorList>
    </citation>
    <scope>NUCLEOTIDE SEQUENCE [LARGE SCALE MRNA]</scope>
    <source>
        <tissue>Placenta</tissue>
    </source>
</reference>
<reference key="4">
    <citation type="journal article" date="2001" name="J. Biol. Chem.">
        <title>Role of the deafness dystonia peptide 1 (DDP1) in import of human Tim23 into the inner membrane of mitochondria.</title>
        <authorList>
            <person name="Rothbauer U."/>
            <person name="Hofmann S."/>
            <person name="Muehlenbein N."/>
            <person name="Paschen S.A."/>
            <person name="Gerbitz K.-D."/>
            <person name="Neupert W."/>
            <person name="Brunner M."/>
            <person name="Bauer M.F."/>
        </authorList>
    </citation>
    <scope>FUNCTION</scope>
    <scope>SUBCELLULAR LOCATION</scope>
    <scope>ZINC-BINDING</scope>
    <scope>INTERACTION WITH TIMM8A</scope>
</reference>
<reference key="5">
    <citation type="journal article" date="2004" name="Hum. Mol. Genet.">
        <title>The calcium-binding aspartate/glutamate carriers, citrin and aralar1, are new substrates for the DDP1/TIMM8a-TIMM13 complex.</title>
        <authorList>
            <person name="Roesch K."/>
            <person name="Hynds P.J."/>
            <person name="Varga R."/>
            <person name="Tranebjaerg L."/>
            <person name="Koehler C.M."/>
        </authorList>
    </citation>
    <scope>FUNCTION</scope>
</reference>
<reference key="6">
    <citation type="journal article" date="2009" name="Anal. Chem.">
        <title>Lys-N and trypsin cover complementary parts of the phosphoproteome in a refined SCX-based approach.</title>
        <authorList>
            <person name="Gauci S."/>
            <person name="Helbig A.O."/>
            <person name="Slijper M."/>
            <person name="Krijgsveld J."/>
            <person name="Heck A.J."/>
            <person name="Mohammed S."/>
        </authorList>
    </citation>
    <scope>ACETYLATION [LARGE SCALE ANALYSIS] AT MET-1</scope>
    <scope>IDENTIFICATION BY MASS SPECTROMETRY [LARGE SCALE ANALYSIS]</scope>
</reference>
<reference key="7">
    <citation type="journal article" date="2011" name="BMC Syst. Biol.">
        <title>Initial characterization of the human central proteome.</title>
        <authorList>
            <person name="Burkard T.R."/>
            <person name="Planyavsky M."/>
            <person name="Kaupe I."/>
            <person name="Breitwieser F.P."/>
            <person name="Buerckstuemmer T."/>
            <person name="Bennett K.L."/>
            <person name="Superti-Furga G."/>
            <person name="Colinge J."/>
        </authorList>
    </citation>
    <scope>IDENTIFICATION BY MASS SPECTROMETRY [LARGE SCALE ANALYSIS]</scope>
</reference>
<reference key="8">
    <citation type="journal article" date="2013" name="J. Proteome Res.">
        <title>Toward a comprehensive characterization of a human cancer cell phosphoproteome.</title>
        <authorList>
            <person name="Zhou H."/>
            <person name="Di Palma S."/>
            <person name="Preisinger C."/>
            <person name="Peng M."/>
            <person name="Polat A.N."/>
            <person name="Heck A.J."/>
            <person name="Mohammed S."/>
        </authorList>
    </citation>
    <scope>PHOSPHORYLATION [LARGE SCALE ANALYSIS] AT SER-7</scope>
    <scope>IDENTIFICATION BY MASS SPECTROMETRY [LARGE SCALE ANALYSIS]</scope>
    <source>
        <tissue>Erythroleukemia</tissue>
    </source>
</reference>
<reference key="9">
    <citation type="journal article" date="2014" name="J. Proteomics">
        <title>An enzyme assisted RP-RPLC approach for in-depth analysis of human liver phosphoproteome.</title>
        <authorList>
            <person name="Bian Y."/>
            <person name="Song C."/>
            <person name="Cheng K."/>
            <person name="Dong M."/>
            <person name="Wang F."/>
            <person name="Huang J."/>
            <person name="Sun D."/>
            <person name="Wang L."/>
            <person name="Ye M."/>
            <person name="Zou H."/>
        </authorList>
    </citation>
    <scope>IDENTIFICATION BY MASS SPECTROMETRY [LARGE SCALE ANALYSIS]</scope>
    <source>
        <tissue>Liver</tissue>
    </source>
</reference>
<reference key="10">
    <citation type="journal article" date="2015" name="Proteomics">
        <title>N-terminome analysis of the human mitochondrial proteome.</title>
        <authorList>
            <person name="Vaca Jacome A.S."/>
            <person name="Rabilloud T."/>
            <person name="Schaeffer-Reiss C."/>
            <person name="Rompais M."/>
            <person name="Ayoub D."/>
            <person name="Lane L."/>
            <person name="Bairoch A."/>
            <person name="Van Dorsselaer A."/>
            <person name="Carapito C."/>
        </authorList>
    </citation>
    <scope>ACETYLATION [LARGE SCALE ANALYSIS] AT MET-1</scope>
    <scope>IDENTIFICATION BY MASS SPECTROMETRY [LARGE SCALE ANALYSIS]</scope>
</reference>
<evidence type="ECO:0000250" key="1"/>
<evidence type="ECO:0000250" key="2">
    <source>
        <dbReference type="UniProtKB" id="P62075"/>
    </source>
</evidence>
<evidence type="ECO:0000269" key="3">
    <source>
    </source>
</evidence>
<evidence type="ECO:0000269" key="4">
    <source>
    </source>
</evidence>
<evidence type="ECO:0000305" key="5"/>
<evidence type="ECO:0007744" key="6">
    <source>
    </source>
</evidence>
<evidence type="ECO:0007744" key="7">
    <source>
    </source>
</evidence>
<evidence type="ECO:0007744" key="8">
    <source>
    </source>
</evidence>
<proteinExistence type="evidence at protein level"/>
<gene>
    <name type="primary">TIMM13</name>
    <name type="synonym">TIM13B</name>
    <name type="synonym">TIMM13A</name>
    <name type="synonym">TIMM13B</name>
</gene>
<dbReference type="EMBL" id="AF144700">
    <property type="protein sequence ID" value="AAD39951.1"/>
    <property type="molecule type" value="mRNA"/>
</dbReference>
<dbReference type="EMBL" id="AF152351">
    <property type="protein sequence ID" value="AAF15101.1"/>
    <property type="molecule type" value="mRNA"/>
</dbReference>
<dbReference type="EMBL" id="AF152352">
    <property type="protein sequence ID" value="AAF15102.1"/>
    <property type="molecule type" value="mRNA"/>
</dbReference>
<dbReference type="EMBL" id="BC008607">
    <property type="protein sequence ID" value="AAH08607.1"/>
    <property type="molecule type" value="mRNA"/>
</dbReference>
<dbReference type="CCDS" id="CCDS12089.1"/>
<dbReference type="RefSeq" id="NP_036590.1">
    <property type="nucleotide sequence ID" value="NM_012458.4"/>
</dbReference>
<dbReference type="SMR" id="Q9Y5L4"/>
<dbReference type="BioGRID" id="117722">
    <property type="interactions" value="182"/>
</dbReference>
<dbReference type="ComplexPortal" id="CPX-6131">
    <property type="entry name" value="TIM8A-TIM13 mitochondrial intermembrane space protein transporter complex"/>
</dbReference>
<dbReference type="ComplexPortal" id="CPX-6132">
    <property type="entry name" value="TIM8B-TIM13 mitochondrial intermembrane space protein transporter complex"/>
</dbReference>
<dbReference type="CORUM" id="Q9Y5L4"/>
<dbReference type="FunCoup" id="Q9Y5L4">
    <property type="interactions" value="2318"/>
</dbReference>
<dbReference type="IntAct" id="Q9Y5L4">
    <property type="interactions" value="112"/>
</dbReference>
<dbReference type="MINT" id="Q9Y5L4"/>
<dbReference type="STRING" id="9606.ENSP00000215570"/>
<dbReference type="iPTMnet" id="Q9Y5L4"/>
<dbReference type="MetOSite" id="Q9Y5L4"/>
<dbReference type="PhosphoSitePlus" id="Q9Y5L4"/>
<dbReference type="SwissPalm" id="Q9Y5L4"/>
<dbReference type="BioMuta" id="TIMM13"/>
<dbReference type="jPOST" id="Q9Y5L4"/>
<dbReference type="MassIVE" id="Q9Y5L4"/>
<dbReference type="PaxDb" id="9606-ENSP00000215570"/>
<dbReference type="PeptideAtlas" id="Q9Y5L4"/>
<dbReference type="ProteomicsDB" id="86442"/>
<dbReference type="Pumba" id="Q9Y5L4"/>
<dbReference type="TopDownProteomics" id="Q9Y5L4"/>
<dbReference type="Antibodypedia" id="23013">
    <property type="antibodies" value="50 antibodies from 17 providers"/>
</dbReference>
<dbReference type="DNASU" id="26517"/>
<dbReference type="Ensembl" id="ENST00000215570.8">
    <property type="protein sequence ID" value="ENSP00000215570.2"/>
    <property type="gene ID" value="ENSG00000099800.8"/>
</dbReference>
<dbReference type="GeneID" id="26517"/>
<dbReference type="KEGG" id="hsa:26517"/>
<dbReference type="MANE-Select" id="ENST00000215570.8">
    <property type="protein sequence ID" value="ENSP00000215570.2"/>
    <property type="RefSeq nucleotide sequence ID" value="NM_012458.4"/>
    <property type="RefSeq protein sequence ID" value="NP_036590.1"/>
</dbReference>
<dbReference type="UCSC" id="uc002lvx.3">
    <property type="organism name" value="human"/>
</dbReference>
<dbReference type="AGR" id="HGNC:11816"/>
<dbReference type="CTD" id="26517"/>
<dbReference type="DisGeNET" id="26517"/>
<dbReference type="GeneCards" id="TIMM13"/>
<dbReference type="HGNC" id="HGNC:11816">
    <property type="gene designation" value="TIMM13"/>
</dbReference>
<dbReference type="HPA" id="ENSG00000099800">
    <property type="expression patterns" value="Low tissue specificity"/>
</dbReference>
<dbReference type="MIM" id="607383">
    <property type="type" value="gene"/>
</dbReference>
<dbReference type="neXtProt" id="NX_Q9Y5L4"/>
<dbReference type="OpenTargets" id="ENSG00000099800"/>
<dbReference type="PharmGKB" id="PA36522"/>
<dbReference type="VEuPathDB" id="HostDB:ENSG00000099800"/>
<dbReference type="eggNOG" id="KOG1733">
    <property type="taxonomic scope" value="Eukaryota"/>
</dbReference>
<dbReference type="GeneTree" id="ENSGT00390000014000"/>
<dbReference type="HOGENOM" id="CLU_141397_0_2_1"/>
<dbReference type="InParanoid" id="Q9Y5L4"/>
<dbReference type="OMA" id="MAAWNQV"/>
<dbReference type="OrthoDB" id="7813104at2759"/>
<dbReference type="PAN-GO" id="Q9Y5L4">
    <property type="GO annotations" value="2 GO annotations based on evolutionary models"/>
</dbReference>
<dbReference type="PhylomeDB" id="Q9Y5L4"/>
<dbReference type="TreeFam" id="TF106194"/>
<dbReference type="PathwayCommons" id="Q9Y5L4"/>
<dbReference type="Reactome" id="R-HSA-1268020">
    <property type="pathway name" value="Mitochondrial protein import"/>
</dbReference>
<dbReference type="SignaLink" id="Q9Y5L4"/>
<dbReference type="BioGRID-ORCS" id="26517">
    <property type="hits" value="723 hits in 1166 CRISPR screens"/>
</dbReference>
<dbReference type="CD-CODE" id="91857CE7">
    <property type="entry name" value="Nucleolus"/>
</dbReference>
<dbReference type="ChiTaRS" id="TIMM13">
    <property type="organism name" value="human"/>
</dbReference>
<dbReference type="GeneWiki" id="TIMM13"/>
<dbReference type="GenomeRNAi" id="26517"/>
<dbReference type="Pharos" id="Q9Y5L4">
    <property type="development level" value="Tdark"/>
</dbReference>
<dbReference type="PRO" id="PR:Q9Y5L4"/>
<dbReference type="Proteomes" id="UP000005640">
    <property type="component" value="Chromosome 19"/>
</dbReference>
<dbReference type="RNAct" id="Q9Y5L4">
    <property type="molecule type" value="protein"/>
</dbReference>
<dbReference type="Bgee" id="ENSG00000099800">
    <property type="expression patterns" value="Expressed in mucosa of transverse colon and 100 other cell types or tissues"/>
</dbReference>
<dbReference type="ExpressionAtlas" id="Q9Y5L4">
    <property type="expression patterns" value="baseline and differential"/>
</dbReference>
<dbReference type="GO" id="GO:0001650">
    <property type="term" value="C:fibrillar center"/>
    <property type="evidence" value="ECO:0000314"/>
    <property type="project" value="HPA"/>
</dbReference>
<dbReference type="GO" id="GO:0005743">
    <property type="term" value="C:mitochondrial inner membrane"/>
    <property type="evidence" value="ECO:0000314"/>
    <property type="project" value="CAFA"/>
</dbReference>
<dbReference type="GO" id="GO:0005758">
    <property type="term" value="C:mitochondrial intermembrane space"/>
    <property type="evidence" value="ECO:0000303"/>
    <property type="project" value="ComplexPortal"/>
</dbReference>
<dbReference type="GO" id="GO:0042719">
    <property type="term" value="C:mitochondrial intermembrane space protein transporter complex"/>
    <property type="evidence" value="ECO:0000353"/>
    <property type="project" value="FlyBase"/>
</dbReference>
<dbReference type="GO" id="GO:0005739">
    <property type="term" value="C:mitochondrion"/>
    <property type="evidence" value="ECO:0000314"/>
    <property type="project" value="HPA"/>
</dbReference>
<dbReference type="GO" id="GO:0008270">
    <property type="term" value="F:zinc ion binding"/>
    <property type="evidence" value="ECO:0000304"/>
    <property type="project" value="ProtInc"/>
</dbReference>
<dbReference type="GO" id="GO:0045039">
    <property type="term" value="P:protein insertion into mitochondrial inner membrane"/>
    <property type="evidence" value="ECO:0000315"/>
    <property type="project" value="FlyBase"/>
</dbReference>
<dbReference type="GO" id="GO:0006626">
    <property type="term" value="P:protein targeting to mitochondrion"/>
    <property type="evidence" value="ECO:0000304"/>
    <property type="project" value="ProtInc"/>
</dbReference>
<dbReference type="GO" id="GO:0007605">
    <property type="term" value="P:sensory perception of sound"/>
    <property type="evidence" value="ECO:0000304"/>
    <property type="project" value="ProtInc"/>
</dbReference>
<dbReference type="FunFam" id="1.10.287.810:FF:000001">
    <property type="entry name" value="mitochondrial import inner membrane translocase subunit TIM13"/>
    <property type="match status" value="1"/>
</dbReference>
<dbReference type="Gene3D" id="1.10.287.810">
    <property type="entry name" value="Mitochondrial import inner membrane translocase subunit tim13 like domains"/>
    <property type="match status" value="1"/>
</dbReference>
<dbReference type="InterPro" id="IPR004217">
    <property type="entry name" value="Tim10-like"/>
</dbReference>
<dbReference type="InterPro" id="IPR035427">
    <property type="entry name" value="Tim10-like_dom_sf"/>
</dbReference>
<dbReference type="Pfam" id="PF02953">
    <property type="entry name" value="zf-Tim10_DDP"/>
    <property type="match status" value="1"/>
</dbReference>
<dbReference type="SUPFAM" id="SSF144122">
    <property type="entry name" value="Tim10-like"/>
    <property type="match status" value="1"/>
</dbReference>
<name>TIM13_HUMAN</name>
<protein>
    <recommendedName>
        <fullName>Mitochondrial import inner membrane translocase subunit Tim13</fullName>
    </recommendedName>
</protein>
<keyword id="KW-0007">Acetylation</keyword>
<keyword id="KW-0143">Chaperone</keyword>
<keyword id="KW-1015">Disulfide bond</keyword>
<keyword id="KW-0472">Membrane</keyword>
<keyword id="KW-0479">Metal-binding</keyword>
<keyword id="KW-0496">Mitochondrion</keyword>
<keyword id="KW-0999">Mitochondrion inner membrane</keyword>
<keyword id="KW-0597">Phosphoprotein</keyword>
<keyword id="KW-0653">Protein transport</keyword>
<keyword id="KW-1267">Proteomics identification</keyword>
<keyword id="KW-1185">Reference proteome</keyword>
<keyword id="KW-0811">Translocation</keyword>
<keyword id="KW-0813">Transport</keyword>
<keyword id="KW-0862">Zinc</keyword>
<accession>Q9Y5L4</accession>
<accession>P62206</accession>
<accession>Q9UHL8</accession>
<accession>Q9WTL1</accession>
<sequence length="95" mass="10500">MEGGFGSDFGGSGSGKLDPGLIMEQVKVQIAVANAQELLQRMTDKCFRKCIGKPGGSLDNSEQKCIAMCMDRYMDAWNTVSRAYNSRLQRERANM</sequence>
<organism>
    <name type="scientific">Homo sapiens</name>
    <name type="common">Human</name>
    <dbReference type="NCBI Taxonomy" id="9606"/>
    <lineage>
        <taxon>Eukaryota</taxon>
        <taxon>Metazoa</taxon>
        <taxon>Chordata</taxon>
        <taxon>Craniata</taxon>
        <taxon>Vertebrata</taxon>
        <taxon>Euteleostomi</taxon>
        <taxon>Mammalia</taxon>
        <taxon>Eutheria</taxon>
        <taxon>Euarchontoglires</taxon>
        <taxon>Primates</taxon>
        <taxon>Haplorrhini</taxon>
        <taxon>Catarrhini</taxon>
        <taxon>Hominidae</taxon>
        <taxon>Homo</taxon>
    </lineage>
</organism>
<feature type="chain" id="PRO_0000193623" description="Mitochondrial import inner membrane translocase subunit Tim13">
    <location>
        <begin position="1"/>
        <end position="95"/>
    </location>
</feature>
<feature type="short sequence motif" description="Twin CX3C motif">
    <location>
        <begin position="46"/>
        <end position="69"/>
    </location>
</feature>
<feature type="modified residue" description="N-acetylmethionine" evidence="6 8">
    <location>
        <position position="1"/>
    </location>
</feature>
<feature type="modified residue" description="Phosphoserine" evidence="7">
    <location>
        <position position="7"/>
    </location>
</feature>
<feature type="modified residue" description="N6-succinyllysine" evidence="2">
    <location>
        <position position="53"/>
    </location>
</feature>
<feature type="disulfide bond" evidence="1">
    <location>
        <begin position="46"/>
        <end position="69"/>
    </location>
</feature>
<feature type="disulfide bond" evidence="1">
    <location>
        <begin position="50"/>
        <end position="65"/>
    </location>
</feature>
<feature type="sequence conflict" description="In Ref. 2; AAF15101." evidence="5" ref="2">
    <original>EG</original>
    <variation>DS</variation>
    <location>
        <begin position="2"/>
        <end position="3"/>
    </location>
</feature>
<feature type="sequence conflict" description="In Ref. 2; AAF15101." evidence="5" ref="2">
    <original>SGS</original>
    <variation>TGG</variation>
    <location>
        <begin position="12"/>
        <end position="14"/>
    </location>
</feature>
<feature type="sequence conflict" description="In Ref. 2; AAF15101." evidence="5" ref="2">
    <original>L</original>
    <variation>A</variation>
    <location>
        <position position="21"/>
    </location>
</feature>
<comment type="function">
    <text evidence="3 4">Mitochondrial intermembrane chaperone that participates in the import and insertion of some multi-pass transmembrane proteins into the mitochondrial inner membrane. Also required for the transfer of beta-barrel precursors from the TOM complex to the sorting and assembly machinery (SAM complex) of the outer membrane. Acts as a chaperone-like protein that protects the hydrophobic precursors from aggregation and guide them through the mitochondrial intermembrane space. The TIMM8-TIMM13 complex mediates the import of proteins such as TIMM23, SLC25A12/ARALAR1 and SLC25A13/ARALAR2, while the predominant TIMM9-TIMM10 70 kDa complex mediates the import of much more proteins.</text>
</comment>
<comment type="subunit">
    <text>Heterohexamer; composed of 3 copies of TIMM8 (TIMM8A or TIMM8B) and 3 copies of TIMM13, named soluble 70 kDa complex. Associates with the TIM22 complex, whose core is composed of TIMM22.</text>
</comment>
<comment type="interaction">
    <interactant intactId="EBI-1057344">
        <id>Q9Y5L4</id>
    </interactant>
    <interactant intactId="EBI-1049822">
        <id>O60220</id>
        <label>TIMM8A</label>
    </interactant>
    <organismsDiffer>false</organismsDiffer>
    <experiments>3</experiments>
</comment>
<comment type="interaction">
    <interactant intactId="EBI-1057344">
        <id>Q9Y5L4</id>
    </interactant>
    <interactant intactId="EBI-739895">
        <id>Q8N6Y0</id>
        <label>USHBP1</label>
    </interactant>
    <organismsDiffer>false</organismsDiffer>
    <experiments>3</experiments>
</comment>
<comment type="subcellular location">
    <subcellularLocation>
        <location evidence="3">Mitochondrion inner membrane</location>
        <topology evidence="3">Peripheral membrane protein</topology>
        <orientation evidence="3">Intermembrane side</orientation>
    </subcellularLocation>
</comment>
<comment type="tissue specificity">
    <text>Ubiquitous, with highest expression in heart, kidney, liver and skeletal muscle.</text>
</comment>
<comment type="domain">
    <text evidence="1">The twin CX3C motif contains 4 conserved Cys residues that form 2 disulfide bonds in the mitochondrial intermembrane space. However, during the transit of TIMM13 from cytoplasm into mitochondrion, the Cys residues probably coordinate zinc, thereby preventing folding and allowing its transfer across mitochondrial outer membrane (By similarity).</text>
</comment>
<comment type="similarity">
    <text evidence="5">Belongs to the small Tim family.</text>
</comment>